<keyword id="KW-0687">Ribonucleoprotein</keyword>
<keyword id="KW-0689">Ribosomal protein</keyword>
<keyword id="KW-0694">RNA-binding</keyword>
<keyword id="KW-0699">rRNA-binding</keyword>
<keyword id="KW-0820">tRNA-binding</keyword>
<proteinExistence type="inferred from homology"/>
<evidence type="ECO:0000255" key="1">
    <source>
        <dbReference type="HAMAP-Rule" id="MF_01333"/>
    </source>
</evidence>
<evidence type="ECO:0000305" key="2"/>
<comment type="function">
    <text evidence="1">This is one of the proteins that bind and probably mediate the attachment of the 5S RNA into the large ribosomal subunit, where it forms part of the central protuberance. In the 70S ribosome it contacts protein S13 of the 30S subunit (bridge B1b), connecting the 2 subunits; this bridge is implicated in subunit movement. Contacts the P site tRNA; the 5S rRNA and some of its associated proteins might help stabilize positioning of ribosome-bound tRNAs.</text>
</comment>
<comment type="subunit">
    <text evidence="1">Part of the 50S ribosomal subunit; part of the 5S rRNA/L5/L18/L25 subcomplex. Contacts the 5S rRNA and the P site tRNA. Forms a bridge to the 30S subunit in the 70S ribosome.</text>
</comment>
<comment type="similarity">
    <text evidence="1">Belongs to the universal ribosomal protein uL5 family.</text>
</comment>
<feature type="chain" id="PRO_1000052826" description="Large ribosomal subunit protein uL5">
    <location>
        <begin position="1"/>
        <end position="179"/>
    </location>
</feature>
<protein>
    <recommendedName>
        <fullName evidence="1">Large ribosomal subunit protein uL5</fullName>
    </recommendedName>
    <alternativeName>
        <fullName evidence="2">50S ribosomal protein L5</fullName>
    </alternativeName>
</protein>
<reference key="1">
    <citation type="submission" date="2006-09" db="EMBL/GenBank/DDBJ databases">
        <title>Complete sequence of chromosome 1 of Shewanella sp. ANA-3.</title>
        <authorList>
            <person name="Copeland A."/>
            <person name="Lucas S."/>
            <person name="Lapidus A."/>
            <person name="Barry K."/>
            <person name="Detter J.C."/>
            <person name="Glavina del Rio T."/>
            <person name="Hammon N."/>
            <person name="Israni S."/>
            <person name="Dalin E."/>
            <person name="Tice H."/>
            <person name="Pitluck S."/>
            <person name="Chertkov O."/>
            <person name="Brettin T."/>
            <person name="Bruce D."/>
            <person name="Han C."/>
            <person name="Tapia R."/>
            <person name="Gilna P."/>
            <person name="Schmutz J."/>
            <person name="Larimer F."/>
            <person name="Land M."/>
            <person name="Hauser L."/>
            <person name="Kyrpides N."/>
            <person name="Kim E."/>
            <person name="Newman D."/>
            <person name="Salticov C."/>
            <person name="Konstantinidis K."/>
            <person name="Klappenback J."/>
            <person name="Tiedje J."/>
            <person name="Richardson P."/>
        </authorList>
    </citation>
    <scope>NUCLEOTIDE SEQUENCE [LARGE SCALE GENOMIC DNA]</scope>
    <source>
        <strain>ANA-3</strain>
    </source>
</reference>
<organism>
    <name type="scientific">Shewanella sp. (strain ANA-3)</name>
    <dbReference type="NCBI Taxonomy" id="94122"/>
    <lineage>
        <taxon>Bacteria</taxon>
        <taxon>Pseudomonadati</taxon>
        <taxon>Pseudomonadota</taxon>
        <taxon>Gammaproteobacteria</taxon>
        <taxon>Alteromonadales</taxon>
        <taxon>Shewanellaceae</taxon>
        <taxon>Shewanella</taxon>
    </lineage>
</organism>
<accession>A0KRN6</accession>
<gene>
    <name evidence="1" type="primary">rplE</name>
    <name type="ordered locus">Shewana3_0211</name>
</gene>
<sequence length="179" mass="20204">MAKLHDKYQETVVAELTKKFGYTSVMQVPRIEKITLNMGVGEAVADKKVMEHAVRDMTAIAGQKPVVTVARKSVAGFKIREGYPIGCKVTLRGERMWEFLERLVDIAIPRIRDFRGLSAKAFDGRGNYAMGVREQIIFPEIDYDKIDKIRGMDIVITTSANSDEEGRALLDAFNFPFKK</sequence>
<dbReference type="EMBL" id="CP000469">
    <property type="protein sequence ID" value="ABK46455.1"/>
    <property type="molecule type" value="Genomic_DNA"/>
</dbReference>
<dbReference type="RefSeq" id="WP_011715464.1">
    <property type="nucleotide sequence ID" value="NC_008577.1"/>
</dbReference>
<dbReference type="SMR" id="A0KRN6"/>
<dbReference type="STRING" id="94122.Shewana3_0211"/>
<dbReference type="GeneID" id="94726198"/>
<dbReference type="KEGG" id="shn:Shewana3_0211"/>
<dbReference type="eggNOG" id="COG0094">
    <property type="taxonomic scope" value="Bacteria"/>
</dbReference>
<dbReference type="HOGENOM" id="CLU_061015_2_1_6"/>
<dbReference type="OrthoDB" id="9806626at2"/>
<dbReference type="Proteomes" id="UP000002589">
    <property type="component" value="Chromosome"/>
</dbReference>
<dbReference type="GO" id="GO:1990904">
    <property type="term" value="C:ribonucleoprotein complex"/>
    <property type="evidence" value="ECO:0007669"/>
    <property type="project" value="UniProtKB-KW"/>
</dbReference>
<dbReference type="GO" id="GO:0005840">
    <property type="term" value="C:ribosome"/>
    <property type="evidence" value="ECO:0007669"/>
    <property type="project" value="UniProtKB-KW"/>
</dbReference>
<dbReference type="GO" id="GO:0019843">
    <property type="term" value="F:rRNA binding"/>
    <property type="evidence" value="ECO:0007669"/>
    <property type="project" value="UniProtKB-UniRule"/>
</dbReference>
<dbReference type="GO" id="GO:0003735">
    <property type="term" value="F:structural constituent of ribosome"/>
    <property type="evidence" value="ECO:0007669"/>
    <property type="project" value="InterPro"/>
</dbReference>
<dbReference type="GO" id="GO:0000049">
    <property type="term" value="F:tRNA binding"/>
    <property type="evidence" value="ECO:0007669"/>
    <property type="project" value="UniProtKB-UniRule"/>
</dbReference>
<dbReference type="GO" id="GO:0006412">
    <property type="term" value="P:translation"/>
    <property type="evidence" value="ECO:0007669"/>
    <property type="project" value="UniProtKB-UniRule"/>
</dbReference>
<dbReference type="FunFam" id="3.30.1440.10:FF:000001">
    <property type="entry name" value="50S ribosomal protein L5"/>
    <property type="match status" value="1"/>
</dbReference>
<dbReference type="Gene3D" id="3.30.1440.10">
    <property type="match status" value="1"/>
</dbReference>
<dbReference type="HAMAP" id="MF_01333_B">
    <property type="entry name" value="Ribosomal_uL5_B"/>
    <property type="match status" value="1"/>
</dbReference>
<dbReference type="InterPro" id="IPR002132">
    <property type="entry name" value="Ribosomal_uL5"/>
</dbReference>
<dbReference type="InterPro" id="IPR020930">
    <property type="entry name" value="Ribosomal_uL5_bac-type"/>
</dbReference>
<dbReference type="InterPro" id="IPR031309">
    <property type="entry name" value="Ribosomal_uL5_C"/>
</dbReference>
<dbReference type="InterPro" id="IPR020929">
    <property type="entry name" value="Ribosomal_uL5_CS"/>
</dbReference>
<dbReference type="InterPro" id="IPR022803">
    <property type="entry name" value="Ribosomal_uL5_dom_sf"/>
</dbReference>
<dbReference type="InterPro" id="IPR031310">
    <property type="entry name" value="Ribosomal_uL5_N"/>
</dbReference>
<dbReference type="NCBIfam" id="NF000585">
    <property type="entry name" value="PRK00010.1"/>
    <property type="match status" value="1"/>
</dbReference>
<dbReference type="PANTHER" id="PTHR11994">
    <property type="entry name" value="60S RIBOSOMAL PROTEIN L11-RELATED"/>
    <property type="match status" value="1"/>
</dbReference>
<dbReference type="Pfam" id="PF00281">
    <property type="entry name" value="Ribosomal_L5"/>
    <property type="match status" value="1"/>
</dbReference>
<dbReference type="Pfam" id="PF00673">
    <property type="entry name" value="Ribosomal_L5_C"/>
    <property type="match status" value="1"/>
</dbReference>
<dbReference type="PIRSF" id="PIRSF002161">
    <property type="entry name" value="Ribosomal_L5"/>
    <property type="match status" value="1"/>
</dbReference>
<dbReference type="SUPFAM" id="SSF55282">
    <property type="entry name" value="RL5-like"/>
    <property type="match status" value="1"/>
</dbReference>
<dbReference type="PROSITE" id="PS00358">
    <property type="entry name" value="RIBOSOMAL_L5"/>
    <property type="match status" value="1"/>
</dbReference>
<name>RL5_SHESA</name>